<sequence>MELQRAQRNLKFLQNEDYVNVTDQTNLNGESQNAYSLGMETQVPEMQFSLSSDDDSIGTQVKSVTAQKSPMTQETTKNDTERNKDVDKSCNPVSTSHPDLGGSNIEENIFINTQIQSRLDDAEEETNLKLKLEKFKYSFKSSNADDTHSNANVTAKRRPAIRKANSKLKTKPKTKRDPKIIKNITDFNINNYERSRTASLLKQLSGKHKKVLDIIKTQNEGNSDKPPRARNNKGEKATFDTYSEQEWKDIMKLLLQKFPQSEETDLNEVQKFLYGSEKSSNSLDNQESSQQRLWTASQLPPELPDEAIQPEQEERIRDTQSAVNFLSLSQVMDDKSEIMKDEESIIISRGDSTSSQEYGNGLEPQQPVGNVVGEDIELAVGTRINAFSLTDYKACKPMSVEVSRRCENSTDNDYDNISIVSDTTDETSTLFPLDQYRYVFIENDERPPLATDTIGSTQFFTPNTSPLDGIIDLTQESFKAVRSLISPLKVENNKTGVTSQASNQVQVPATRTPTIIPQKNLTTTLKTEEEKNNIGSSIRVKLLQESVVKLNPKLVKHNFYRVEANDSEEEETEFDDQFCIADIQLVDSSKISTKDSTQNPTTSNDIIDTSAASSIASPEKFCEIMMSQSMKELRQSLKTVGLKPMRTKVEIIQSLQTASQILSTANPDNKGEHGGVANFSKIEIFDHLTELIEAFPDFLERIYTFEPIPLNELIEKLFSAEPFVSQIDEMTIREWADVQGICLRNDKK</sequence>
<comment type="function">
    <text evidence="3">Regulatory subunit that interacts with and increases the activity of different structure-specific endonucleases. Has several distinct roles in protecting genome stability by resolving diverse forms of deleterious DNA structures. Component of the SLX1-SLX4 structure-specific endonuclease that resolves DNA secondary structures generated during DNA repair and recombination. Has endonuclease activity towards branched DNA substrates, introducing single-strand cuts in duplex DNA close to junctions with ss-DNA. Has a preference for simple Y, 5'-flap and replication fork-like structures. It cleaves the strand bearing the 5'-non-homologous arm at the branch site junction and generates ligatable, nicked products from the 5'-flap or replication fork substrates. Plays a critical role in maintaining the integrity of the ribosomal DNA (rDNA) loci, where it has a role in re-starting stalled replication forks. Has Holliday junction resolvase activity in vitro. Interacts with the structure-specific RAD1-RAD10 endonuclease and promotes RAD1-RAD10-dependent 3'-non-homologous tail removal (NHTR) during repair of double-strand breaks by single-strand annealing. SLX4 also promotes recovery from DNA-alkylation-induced replisome stalling during DNA replication by facilitating the error-free mode of lesion bypass. This does not require SLX1 or RAD1-RAD10, but probably RTT107.</text>
</comment>
<comment type="subunit">
    <text evidence="3">Forms a heterodimer with SLX1. Interacts with RAD1; catalytic subunit of the RAD1-RAD10 endonuclease. Interacts with RTT107.</text>
</comment>
<comment type="subcellular location">
    <subcellularLocation>
        <location evidence="3">Nucleus</location>
    </subcellularLocation>
    <subcellularLocation>
        <location evidence="3">Cytoplasm</location>
    </subcellularLocation>
</comment>
<comment type="PTM">
    <text evidence="3">Phosphorylated by ATR (MEC1) and ATM (TEL1) upon DNA damage. This appears to be required for the function with the RAD1-RAD10 endonuclease.</text>
</comment>
<comment type="similarity">
    <text evidence="3">Belongs to the SLX4 family.</text>
</comment>
<reference key="1">
    <citation type="journal article" date="2008" name="FEMS Yeast Res.">
        <title>Comparative genome analysis of a Saccharomyces cerevisiae wine strain.</title>
        <authorList>
            <person name="Borneman A.R."/>
            <person name="Forgan A.H."/>
            <person name="Pretorius I.S."/>
            <person name="Chambers P.J."/>
        </authorList>
    </citation>
    <scope>NUCLEOTIDE SEQUENCE [LARGE SCALE GENOMIC DNA]</scope>
    <source>
        <strain>AWRI1631</strain>
    </source>
</reference>
<accession>B5VN64</accession>
<protein>
    <recommendedName>
        <fullName evidence="3">Structure-specific endonuclease subunit SLX4</fullName>
    </recommendedName>
</protein>
<organism>
    <name type="scientific">Saccharomyces cerevisiae (strain AWRI1631)</name>
    <name type="common">Baker's yeast</name>
    <dbReference type="NCBI Taxonomy" id="545124"/>
    <lineage>
        <taxon>Eukaryota</taxon>
        <taxon>Fungi</taxon>
        <taxon>Dikarya</taxon>
        <taxon>Ascomycota</taxon>
        <taxon>Saccharomycotina</taxon>
        <taxon>Saccharomycetes</taxon>
        <taxon>Saccharomycetales</taxon>
        <taxon>Saccharomycetaceae</taxon>
        <taxon>Saccharomyces</taxon>
    </lineage>
</organism>
<gene>
    <name evidence="3" type="primary">SLX4</name>
    <name type="ORF">AWRI1631_121840</name>
</gene>
<feature type="chain" id="PRO_0000388044" description="Structure-specific endonuclease subunit SLX4">
    <location>
        <begin position="1"/>
        <end position="748"/>
    </location>
</feature>
<feature type="region of interest" description="Disordered" evidence="4">
    <location>
        <begin position="62"/>
        <end position="104"/>
    </location>
</feature>
<feature type="region of interest" description="Disordered" evidence="4">
    <location>
        <begin position="215"/>
        <end position="236"/>
    </location>
</feature>
<feature type="region of interest" description="Disordered" evidence="4">
    <location>
        <begin position="277"/>
        <end position="303"/>
    </location>
</feature>
<feature type="region of interest" description="Disordered" evidence="4">
    <location>
        <begin position="591"/>
        <end position="610"/>
    </location>
</feature>
<feature type="compositionally biased region" description="Polar residues" evidence="4">
    <location>
        <begin position="62"/>
        <end position="75"/>
    </location>
</feature>
<feature type="compositionally biased region" description="Basic and acidic residues" evidence="4">
    <location>
        <begin position="76"/>
        <end position="88"/>
    </location>
</feature>
<feature type="compositionally biased region" description="Basic and acidic residues" evidence="4">
    <location>
        <begin position="222"/>
        <end position="236"/>
    </location>
</feature>
<feature type="compositionally biased region" description="Polar residues" evidence="4">
    <location>
        <begin position="277"/>
        <end position="298"/>
    </location>
</feature>
<feature type="compositionally biased region" description="Polar residues" evidence="4">
    <location>
        <begin position="591"/>
        <end position="602"/>
    </location>
</feature>
<feature type="modified residue" description="Phosphothreonine; by ATR and ATM" evidence="1">
    <location>
        <position position="72"/>
    </location>
</feature>
<feature type="modified residue" description="Phosphothreonine; by ATR and ATM" evidence="2">
    <location>
        <position position="113"/>
    </location>
</feature>
<feature type="modified residue" description="Phosphoserine; by ATR and ATM" evidence="1">
    <location>
        <position position="289"/>
    </location>
</feature>
<feature type="modified residue" description="Phosphothreonine; by ATR and ATM" evidence="2">
    <location>
        <position position="319"/>
    </location>
</feature>
<feature type="modified residue" description="Phosphoserine; by ATR and ATM" evidence="1">
    <location>
        <position position="329"/>
    </location>
</feature>
<feature type="modified residue" description="Phosphoserine; by ATR and ATM" evidence="2">
    <location>
        <position position="355"/>
    </location>
</feature>
<keyword id="KW-0963">Cytoplasm</keyword>
<keyword id="KW-0227">DNA damage</keyword>
<keyword id="KW-0233">DNA recombination</keyword>
<keyword id="KW-0234">DNA repair</keyword>
<keyword id="KW-0539">Nucleus</keyword>
<keyword id="KW-0597">Phosphoprotein</keyword>
<dbReference type="EMBL" id="ABSV01001611">
    <property type="protein sequence ID" value="EDZ70630.1"/>
    <property type="molecule type" value="Genomic_DNA"/>
</dbReference>
<dbReference type="SMR" id="B5VN64"/>
<dbReference type="Proteomes" id="UP000008988">
    <property type="component" value="Unassembled WGS sequence"/>
</dbReference>
<dbReference type="GO" id="GO:0005737">
    <property type="term" value="C:cytoplasm"/>
    <property type="evidence" value="ECO:0007669"/>
    <property type="project" value="UniProtKB-SubCell"/>
</dbReference>
<dbReference type="GO" id="GO:0033557">
    <property type="term" value="C:Slx1-Slx4 complex"/>
    <property type="evidence" value="ECO:0007669"/>
    <property type="project" value="UniProtKB-UniRule"/>
</dbReference>
<dbReference type="GO" id="GO:0017108">
    <property type="term" value="F:5'-flap endonuclease activity"/>
    <property type="evidence" value="ECO:0007669"/>
    <property type="project" value="InterPro"/>
</dbReference>
<dbReference type="GO" id="GO:0006310">
    <property type="term" value="P:DNA recombination"/>
    <property type="evidence" value="ECO:0007669"/>
    <property type="project" value="UniProtKB-UniRule"/>
</dbReference>
<dbReference type="GO" id="GO:0006281">
    <property type="term" value="P:DNA repair"/>
    <property type="evidence" value="ECO:0007669"/>
    <property type="project" value="UniProtKB-UniRule"/>
</dbReference>
<dbReference type="GO" id="GO:0006260">
    <property type="term" value="P:DNA replication"/>
    <property type="evidence" value="ECO:0007669"/>
    <property type="project" value="InterPro"/>
</dbReference>
<dbReference type="CDD" id="cd22869">
    <property type="entry name" value="SLX4_RIM2"/>
    <property type="match status" value="1"/>
</dbReference>
<dbReference type="HAMAP" id="MF_03110">
    <property type="entry name" value="Endonuc_su_Slx4"/>
    <property type="match status" value="1"/>
</dbReference>
<dbReference type="InterPro" id="IPR027784">
    <property type="entry name" value="Slx4_ascomycetes"/>
</dbReference>
<dbReference type="InterPro" id="IPR018574">
    <property type="entry name" value="Structure-sp_endonuc_su_Slx4"/>
</dbReference>
<dbReference type="Pfam" id="PF09494">
    <property type="entry name" value="Slx4"/>
    <property type="match status" value="1"/>
</dbReference>
<evidence type="ECO:0000250" key="1">
    <source>
        <dbReference type="UniProtKB" id="Q12098"/>
    </source>
</evidence>
<evidence type="ECO:0000255" key="2"/>
<evidence type="ECO:0000255" key="3">
    <source>
        <dbReference type="HAMAP-Rule" id="MF_03110"/>
    </source>
</evidence>
<evidence type="ECO:0000256" key="4">
    <source>
        <dbReference type="SAM" id="MobiDB-lite"/>
    </source>
</evidence>
<name>SLX4_YEAS6</name>
<proteinExistence type="inferred from homology"/>